<name>SPRC_COTJA</name>
<gene>
    <name type="primary">SPARC</name>
</gene>
<accession>O93390</accession>
<keyword id="KW-0084">Basement membrane</keyword>
<keyword id="KW-0106">Calcium</keyword>
<keyword id="KW-0186">Copper</keyword>
<keyword id="KW-1015">Disulfide bond</keyword>
<keyword id="KW-0272">Extracellular matrix</keyword>
<keyword id="KW-0325">Glycoprotein</keyword>
<keyword id="KW-0479">Metal-binding</keyword>
<keyword id="KW-1185">Reference proteome</keyword>
<keyword id="KW-0964">Secreted</keyword>
<keyword id="KW-0732">Signal</keyword>
<feature type="signal peptide" evidence="1">
    <location>
        <begin position="1"/>
        <end position="17"/>
    </location>
</feature>
<feature type="chain" id="PRO_0000020309" description="SPARC">
    <location>
        <begin position="18"/>
        <end position="298"/>
    </location>
</feature>
<feature type="domain" description="Follistatin-like">
    <location>
        <begin position="66"/>
        <end position="88"/>
    </location>
</feature>
<feature type="domain" description="Kazal-like" evidence="3">
    <location>
        <begin position="84"/>
        <end position="146"/>
    </location>
</feature>
<feature type="domain" description="EF-hand">
    <location>
        <begin position="256"/>
        <end position="291"/>
    </location>
</feature>
<feature type="binding site" evidence="4">
    <location>
        <position position="269"/>
    </location>
    <ligand>
        <name>Ca(2+)</name>
        <dbReference type="ChEBI" id="CHEBI:29108"/>
    </ligand>
</feature>
<feature type="binding site" evidence="4">
    <location>
        <position position="271"/>
    </location>
    <ligand>
        <name>Ca(2+)</name>
        <dbReference type="ChEBI" id="CHEBI:29108"/>
    </ligand>
</feature>
<feature type="binding site" evidence="4">
    <location>
        <position position="273"/>
    </location>
    <ligand>
        <name>Ca(2+)</name>
        <dbReference type="ChEBI" id="CHEBI:29108"/>
    </ligand>
</feature>
<feature type="binding site" evidence="4">
    <location>
        <position position="275"/>
    </location>
    <ligand>
        <name>Ca(2+)</name>
        <dbReference type="ChEBI" id="CHEBI:29108"/>
    </ligand>
</feature>
<feature type="binding site" evidence="4">
    <location>
        <position position="280"/>
    </location>
    <ligand>
        <name>Ca(2+)</name>
        <dbReference type="ChEBI" id="CHEBI:29108"/>
    </ligand>
</feature>
<feature type="glycosylation site" description="N-linked (GlcNAc...) asparagine" evidence="2">
    <location>
        <position position="111"/>
    </location>
</feature>
<feature type="disulfide bond" evidence="3">
    <location>
        <begin position="67"/>
        <end position="78"/>
    </location>
</feature>
<feature type="disulfide bond" evidence="3">
    <location>
        <begin position="72"/>
        <end position="88"/>
    </location>
</feature>
<feature type="disulfide bond" evidence="3">
    <location>
        <begin position="90"/>
        <end position="125"/>
    </location>
</feature>
<feature type="disulfide bond" evidence="3">
    <location>
        <begin position="96"/>
        <end position="118"/>
    </location>
</feature>
<feature type="disulfide bond" evidence="3">
    <location>
        <begin position="107"/>
        <end position="144"/>
    </location>
</feature>
<feature type="disulfide bond" evidence="3">
    <location>
        <begin position="150"/>
        <end position="260"/>
    </location>
</feature>
<feature type="disulfide bond" evidence="3">
    <location>
        <begin position="268"/>
        <end position="284"/>
    </location>
</feature>
<protein>
    <recommendedName>
        <fullName>SPARC</fullName>
    </recommendedName>
    <alternativeName>
        <fullName>Osteonectin</fullName>
        <shortName>ON</shortName>
    </alternativeName>
    <alternativeName>
        <fullName>Secreted protein acidic and rich in cysteine</fullName>
    </alternativeName>
</protein>
<comment type="function">
    <text evidence="1">Appears to regulate cell growth through interactions with the extracellular matrix and cytokines. Binds calcium and copper, several types of collagen, albumin, thrombospondin, PDGF and cell membranes. There are two calcium binding sites; an acidic domain that binds 5 to 8 Ca(2+) with a low affinity and an EF-hand loop that binds a Ca(2+) ion with a high affinity (By similarity).</text>
</comment>
<comment type="subcellular location">
    <subcellularLocation>
        <location evidence="1">Secreted</location>
        <location evidence="1">Extracellular space</location>
        <location evidence="1">Extracellular matrix</location>
        <location evidence="1">Basement membrane</location>
    </subcellularLocation>
    <text evidence="1">In or around the basement membrane.</text>
</comment>
<comment type="similarity">
    <text evidence="5">Belongs to the SPARC family.</text>
</comment>
<dbReference type="EMBL" id="AF077327">
    <property type="protein sequence ID" value="AAD12179.1"/>
    <property type="molecule type" value="mRNA"/>
</dbReference>
<dbReference type="RefSeq" id="XP_015731286.1">
    <property type="nucleotide sequence ID" value="XM_015875800.2"/>
</dbReference>
<dbReference type="SMR" id="O93390"/>
<dbReference type="GlyCosmos" id="O93390">
    <property type="glycosylation" value="1 site, No reported glycans"/>
</dbReference>
<dbReference type="Ensembl" id="ENSCJPT00005011895.1">
    <property type="protein sequence ID" value="ENSCJPP00005007746.1"/>
    <property type="gene ID" value="ENSCJPG00005007052.1"/>
</dbReference>
<dbReference type="GeneID" id="107320174"/>
<dbReference type="KEGG" id="cjo:107320174"/>
<dbReference type="CTD" id="6678"/>
<dbReference type="GeneTree" id="ENSGT00510000046787"/>
<dbReference type="OrthoDB" id="9972865at2759"/>
<dbReference type="Proteomes" id="UP000694412">
    <property type="component" value="Chromosome 13"/>
</dbReference>
<dbReference type="GO" id="GO:0005604">
    <property type="term" value="C:basement membrane"/>
    <property type="evidence" value="ECO:0007669"/>
    <property type="project" value="UniProtKB-SubCell"/>
</dbReference>
<dbReference type="GO" id="GO:0009986">
    <property type="term" value="C:cell surface"/>
    <property type="evidence" value="ECO:0007669"/>
    <property type="project" value="Ensembl"/>
</dbReference>
<dbReference type="GO" id="GO:0005615">
    <property type="term" value="C:extracellular space"/>
    <property type="evidence" value="ECO:0007669"/>
    <property type="project" value="InterPro"/>
</dbReference>
<dbReference type="GO" id="GO:0016363">
    <property type="term" value="C:nuclear matrix"/>
    <property type="evidence" value="ECO:0007669"/>
    <property type="project" value="Ensembl"/>
</dbReference>
<dbReference type="GO" id="GO:0031092">
    <property type="term" value="C:platelet alpha granule membrane"/>
    <property type="evidence" value="ECO:0007669"/>
    <property type="project" value="Ensembl"/>
</dbReference>
<dbReference type="GO" id="GO:0005509">
    <property type="term" value="F:calcium ion binding"/>
    <property type="evidence" value="ECO:0007669"/>
    <property type="project" value="Ensembl"/>
</dbReference>
<dbReference type="GO" id="GO:0005518">
    <property type="term" value="F:collagen binding"/>
    <property type="evidence" value="ECO:0007669"/>
    <property type="project" value="Ensembl"/>
</dbReference>
<dbReference type="GO" id="GO:0050840">
    <property type="term" value="F:extracellular matrix binding"/>
    <property type="evidence" value="ECO:0007669"/>
    <property type="project" value="TreeGrafter"/>
</dbReference>
<dbReference type="GO" id="GO:0016525">
    <property type="term" value="P:negative regulation of angiogenesis"/>
    <property type="evidence" value="ECO:0007669"/>
    <property type="project" value="Ensembl"/>
</dbReference>
<dbReference type="GO" id="GO:0001937">
    <property type="term" value="P:negative regulation of endothelial cell proliferation"/>
    <property type="evidence" value="ECO:0007669"/>
    <property type="project" value="Ensembl"/>
</dbReference>
<dbReference type="GO" id="GO:0010595">
    <property type="term" value="P:positive regulation of endothelial cell migration"/>
    <property type="evidence" value="ECO:0007669"/>
    <property type="project" value="Ensembl"/>
</dbReference>
<dbReference type="GO" id="GO:0022604">
    <property type="term" value="P:regulation of cell morphogenesis"/>
    <property type="evidence" value="ECO:0007669"/>
    <property type="project" value="Ensembl"/>
</dbReference>
<dbReference type="CDD" id="cd16235">
    <property type="entry name" value="EFh_SPARC_SPARC"/>
    <property type="match status" value="1"/>
</dbReference>
<dbReference type="CDD" id="cd01328">
    <property type="entry name" value="FSL_SPARC"/>
    <property type="match status" value="1"/>
</dbReference>
<dbReference type="FunFam" id="1.10.238.10:FF:000068">
    <property type="entry name" value="SPARC isoform 1"/>
    <property type="match status" value="1"/>
</dbReference>
<dbReference type="FunFam" id="3.30.60.30:FF:000004">
    <property type="entry name" value="SPARC isoform 1"/>
    <property type="match status" value="1"/>
</dbReference>
<dbReference type="Gene3D" id="3.30.60.30">
    <property type="match status" value="1"/>
</dbReference>
<dbReference type="Gene3D" id="1.10.238.10">
    <property type="entry name" value="EF-hand"/>
    <property type="match status" value="1"/>
</dbReference>
<dbReference type="InterPro" id="IPR011992">
    <property type="entry name" value="EF-hand-dom_pair"/>
</dbReference>
<dbReference type="InterPro" id="IPR018247">
    <property type="entry name" value="EF_Hand_1_Ca_BS"/>
</dbReference>
<dbReference type="InterPro" id="IPR003645">
    <property type="entry name" value="Fol_N"/>
</dbReference>
<dbReference type="InterPro" id="IPR015369">
    <property type="entry name" value="Follistatin/Osteonectin_EGF"/>
</dbReference>
<dbReference type="InterPro" id="IPR002350">
    <property type="entry name" value="Kazal_dom"/>
</dbReference>
<dbReference type="InterPro" id="IPR036058">
    <property type="entry name" value="Kazal_dom_sf"/>
</dbReference>
<dbReference type="InterPro" id="IPR001999">
    <property type="entry name" value="Osteonectin_CS"/>
</dbReference>
<dbReference type="InterPro" id="IPR019577">
    <property type="entry name" value="SPARC/Testican_Ca-bd-dom"/>
</dbReference>
<dbReference type="InterPro" id="IPR037641">
    <property type="entry name" value="SPARC_FS"/>
</dbReference>
<dbReference type="PANTHER" id="PTHR13866:SF6">
    <property type="entry name" value="SPARC"/>
    <property type="match status" value="1"/>
</dbReference>
<dbReference type="PANTHER" id="PTHR13866">
    <property type="entry name" value="SPARC OSTEONECTIN"/>
    <property type="match status" value="1"/>
</dbReference>
<dbReference type="Pfam" id="PF09289">
    <property type="entry name" value="FOLN"/>
    <property type="match status" value="1"/>
</dbReference>
<dbReference type="Pfam" id="PF00050">
    <property type="entry name" value="Kazal_1"/>
    <property type="match status" value="1"/>
</dbReference>
<dbReference type="Pfam" id="PF10591">
    <property type="entry name" value="SPARC_Ca_bdg"/>
    <property type="match status" value="1"/>
</dbReference>
<dbReference type="SMART" id="SM00274">
    <property type="entry name" value="FOLN"/>
    <property type="match status" value="1"/>
</dbReference>
<dbReference type="SMART" id="SM00280">
    <property type="entry name" value="KAZAL"/>
    <property type="match status" value="1"/>
</dbReference>
<dbReference type="SUPFAM" id="SSF47473">
    <property type="entry name" value="EF-hand"/>
    <property type="match status" value="1"/>
</dbReference>
<dbReference type="SUPFAM" id="SSF57196">
    <property type="entry name" value="EGF/Laminin"/>
    <property type="match status" value="1"/>
</dbReference>
<dbReference type="SUPFAM" id="SSF100895">
    <property type="entry name" value="Kazal-type serine protease inhibitors"/>
    <property type="match status" value="1"/>
</dbReference>
<dbReference type="PROSITE" id="PS00018">
    <property type="entry name" value="EF_HAND_1"/>
    <property type="match status" value="1"/>
</dbReference>
<dbReference type="PROSITE" id="PS51465">
    <property type="entry name" value="KAZAL_2"/>
    <property type="match status" value="1"/>
</dbReference>
<dbReference type="PROSITE" id="PS00612">
    <property type="entry name" value="OSTEONECTIN_1"/>
    <property type="match status" value="1"/>
</dbReference>
<dbReference type="PROSITE" id="PS00613">
    <property type="entry name" value="OSTEONECTIN_2"/>
    <property type="match status" value="1"/>
</dbReference>
<sequence length="298" mass="34052">MRAWIFFLLCLAGKALAAPQEALPDETEVIEDVTTEEPVGANPVQVEVGEFEEPTEDVEEIVAENPCQNHHCKHGKVCEVDDNNSPMCVCQDPSSCPATSGVFEKVCGTDNKTYDSSCHFFATKCTLEGTKKGHKLHLDYIGPCKFIPPCLDTELTEFPLRMRDWLKNVLITLYERDEDNNLLTEKQKLKVKKIHENEKRLEAGDHTVELLARDFEKNYNMYIFPVHWQFGQLDQHPIDGYLSHTELAPLRAPLIPMEHCTTRFFEACDLDNDKYIALEEWASCFGIKEKDIDKDLVI</sequence>
<reference key="1">
    <citation type="submission" date="1998-07" db="EMBL/GenBank/DDBJ databases">
        <title>Isolation of quail osteonectin cDNA.</title>
        <authorList>
            <person name="Weiskirchen R."/>
            <person name="Bister K."/>
        </authorList>
    </citation>
    <scope>NUCLEOTIDE SEQUENCE [MRNA]</scope>
</reference>
<proteinExistence type="evidence at transcript level"/>
<organism>
    <name type="scientific">Coturnix japonica</name>
    <name type="common">Japanese quail</name>
    <name type="synonym">Coturnix coturnix japonica</name>
    <dbReference type="NCBI Taxonomy" id="93934"/>
    <lineage>
        <taxon>Eukaryota</taxon>
        <taxon>Metazoa</taxon>
        <taxon>Chordata</taxon>
        <taxon>Craniata</taxon>
        <taxon>Vertebrata</taxon>
        <taxon>Euteleostomi</taxon>
        <taxon>Archelosauria</taxon>
        <taxon>Archosauria</taxon>
        <taxon>Dinosauria</taxon>
        <taxon>Saurischia</taxon>
        <taxon>Theropoda</taxon>
        <taxon>Coelurosauria</taxon>
        <taxon>Aves</taxon>
        <taxon>Neognathae</taxon>
        <taxon>Galloanserae</taxon>
        <taxon>Galliformes</taxon>
        <taxon>Phasianidae</taxon>
        <taxon>Perdicinae</taxon>
        <taxon>Coturnix</taxon>
    </lineage>
</organism>
<evidence type="ECO:0000250" key="1"/>
<evidence type="ECO:0000255" key="2"/>
<evidence type="ECO:0000255" key="3">
    <source>
        <dbReference type="PROSITE-ProRule" id="PRU00798"/>
    </source>
</evidence>
<evidence type="ECO:0000255" key="4">
    <source>
        <dbReference type="PROSITE-ProRule" id="PRU10142"/>
    </source>
</evidence>
<evidence type="ECO:0000305" key="5"/>